<comment type="function">
    <text evidence="3">Involved in peroxisome biosynthesis and integrity. Assembles membrane vesicles before the matrix proteins are translocated. As a docking factor for PEX19, is necessary for the import of peroxisomal membrane proteins in the peroxisomes.</text>
</comment>
<comment type="subunit">
    <text evidence="3">Interacts with PEX19.</text>
</comment>
<comment type="subcellular location">
    <subcellularLocation>
        <location evidence="3">Peroxisome membrane</location>
        <topology evidence="2">Multi-pass membrane protein</topology>
    </subcellularLocation>
</comment>
<comment type="similarity">
    <text evidence="4">Belongs to the peroxin-3 family.</text>
</comment>
<gene>
    <name type="primary">Pex3</name>
</gene>
<reference key="1">
    <citation type="journal article" date="2000" name="Mol. Biol. Cell">
        <title>The peroxin pex3p initiates membrane assembly in peroxisome biogenesis.</title>
        <authorList>
            <person name="Ghaedi K."/>
            <person name="Tamura S."/>
            <person name="Okumoto K."/>
            <person name="Matsuzono Y."/>
            <person name="Fujiki Y."/>
        </authorList>
    </citation>
    <scope>NUCLEOTIDE SEQUENCE [MRNA]</scope>
    <scope>FUNCTION</scope>
    <scope>SUBCELLULAR LOCATION</scope>
    <scope>INTERACTION WITH PEX19</scope>
    <source>
        <tissue>Liver</tissue>
    </source>
</reference>
<reference key="2">
    <citation type="journal article" date="2004" name="Genome Res.">
        <title>The status, quality, and expansion of the NIH full-length cDNA project: the Mammalian Gene Collection (MGC).</title>
        <authorList>
            <consortium name="The MGC Project Team"/>
        </authorList>
    </citation>
    <scope>NUCLEOTIDE SEQUENCE [LARGE SCALE MRNA]</scope>
    <source>
        <tissue>Prostate</tissue>
    </source>
</reference>
<reference key="3">
    <citation type="journal article" date="1999" name="Anal. Biochem.">
        <title>Alkaline density gradient floatation of membranes: polypeptide composition of the mammalian peroxisomal membrane.</title>
        <authorList>
            <person name="Gouveia A.M.M."/>
            <person name="Reguenga C."/>
            <person name="Oliveira M.E.M."/>
            <person name="Eckerskorn C."/>
            <person name="Sa-Miranda C."/>
            <person name="Azevedo J.E."/>
        </authorList>
    </citation>
    <scope>PROTEIN SEQUENCE OF 1-12</scope>
    <source>
        <tissue>Liver</tissue>
    </source>
</reference>
<accession>Q9JJK4</accession>
<evidence type="ECO:0000250" key="1">
    <source>
        <dbReference type="UniProtKB" id="P56589"/>
    </source>
</evidence>
<evidence type="ECO:0000255" key="2"/>
<evidence type="ECO:0000269" key="3">
    <source>
    </source>
</evidence>
<evidence type="ECO:0000305" key="4"/>
<organism>
    <name type="scientific">Rattus norvegicus</name>
    <name type="common">Rat</name>
    <dbReference type="NCBI Taxonomy" id="10116"/>
    <lineage>
        <taxon>Eukaryota</taxon>
        <taxon>Metazoa</taxon>
        <taxon>Chordata</taxon>
        <taxon>Craniata</taxon>
        <taxon>Vertebrata</taxon>
        <taxon>Euteleostomi</taxon>
        <taxon>Mammalia</taxon>
        <taxon>Eutheria</taxon>
        <taxon>Euarchontoglires</taxon>
        <taxon>Glires</taxon>
        <taxon>Rodentia</taxon>
        <taxon>Myomorpha</taxon>
        <taxon>Muroidea</taxon>
        <taxon>Muridae</taxon>
        <taxon>Murinae</taxon>
        <taxon>Rattus</taxon>
    </lineage>
</organism>
<keyword id="KW-0903">Direct protein sequencing</keyword>
<keyword id="KW-0472">Membrane</keyword>
<keyword id="KW-0576">Peroxisome</keyword>
<keyword id="KW-0962">Peroxisome biogenesis</keyword>
<keyword id="KW-1185">Reference proteome</keyword>
<keyword id="KW-0812">Transmembrane</keyword>
<keyword id="KW-1133">Transmembrane helix</keyword>
<protein>
    <recommendedName>
        <fullName>Peroxisomal biogenesis factor 3</fullName>
    </recommendedName>
    <alternativeName>
        <fullName>Peroxin-3</fullName>
    </alternativeName>
    <alternativeName>
        <fullName>Peroxisomal assembly protein PEX3</fullName>
    </alternativeName>
</protein>
<proteinExistence type="evidence at protein level"/>
<feature type="chain" id="PRO_0000208740" description="Peroxisomal biogenesis factor 3">
    <location>
        <begin position="1"/>
        <end position="372"/>
    </location>
</feature>
<feature type="topological domain" description="Cytoplasmic" evidence="2">
    <location>
        <begin position="1"/>
        <end position="15"/>
    </location>
</feature>
<feature type="transmembrane region" description="Helical" evidence="2">
    <location>
        <begin position="16"/>
        <end position="36"/>
    </location>
</feature>
<feature type="topological domain" description="Peroxisomal" evidence="2">
    <location>
        <begin position="37"/>
        <end position="116"/>
    </location>
</feature>
<feature type="transmembrane region" description="Helical" evidence="2">
    <location>
        <begin position="117"/>
        <end position="140"/>
    </location>
</feature>
<feature type="topological domain" description="Cytoplasmic" evidence="2">
    <location>
        <begin position="141"/>
        <end position="372"/>
    </location>
</feature>
<feature type="region of interest" description="Targeting to peroxisomes" evidence="1">
    <location>
        <begin position="1"/>
        <end position="45"/>
    </location>
</feature>
<feature type="region of interest" description="Interaction with PEX19" evidence="1">
    <location>
        <begin position="120"/>
        <end position="136"/>
    </location>
</feature>
<name>PEX3_RAT</name>
<dbReference type="EMBL" id="AB035306">
    <property type="protein sequence ID" value="BAA97992.1"/>
    <property type="molecule type" value="mRNA"/>
</dbReference>
<dbReference type="EMBL" id="BC062046">
    <property type="protein sequence ID" value="AAH62046.1"/>
    <property type="molecule type" value="mRNA"/>
</dbReference>
<dbReference type="RefSeq" id="NP_112640.1">
    <property type="nucleotide sequence ID" value="NM_031350.2"/>
</dbReference>
<dbReference type="SMR" id="Q9JJK4"/>
<dbReference type="BioGRID" id="249738">
    <property type="interactions" value="1"/>
</dbReference>
<dbReference type="FunCoup" id="Q9JJK4">
    <property type="interactions" value="2931"/>
</dbReference>
<dbReference type="STRING" id="10116.ENSRNOP00000021524"/>
<dbReference type="PhosphoSitePlus" id="Q9JJK4"/>
<dbReference type="jPOST" id="Q9JJK4"/>
<dbReference type="PaxDb" id="10116-ENSRNOP00000021524"/>
<dbReference type="GeneID" id="83519"/>
<dbReference type="KEGG" id="rno:83519"/>
<dbReference type="UCSC" id="RGD:621636">
    <property type="organism name" value="rat"/>
</dbReference>
<dbReference type="AGR" id="RGD:621636"/>
<dbReference type="CTD" id="8504"/>
<dbReference type="RGD" id="621636">
    <property type="gene designation" value="Pex3"/>
</dbReference>
<dbReference type="VEuPathDB" id="HostDB:ENSRNOG00000015660"/>
<dbReference type="eggNOG" id="KOG4444">
    <property type="taxonomic scope" value="Eukaryota"/>
</dbReference>
<dbReference type="HOGENOM" id="CLU_041367_2_0_1"/>
<dbReference type="InParanoid" id="Q9JJK4"/>
<dbReference type="OrthoDB" id="19172at9989"/>
<dbReference type="PhylomeDB" id="Q9JJK4"/>
<dbReference type="TreeFam" id="TF352826"/>
<dbReference type="Reactome" id="R-RNO-1369062">
    <property type="pathway name" value="ABC transporters in lipid homeostasis"/>
</dbReference>
<dbReference type="Reactome" id="R-RNO-9603798">
    <property type="pathway name" value="Class I peroxisomal membrane protein import"/>
</dbReference>
<dbReference type="PRO" id="PR:Q9JJK4"/>
<dbReference type="Proteomes" id="UP000002494">
    <property type="component" value="Chromosome 1"/>
</dbReference>
<dbReference type="Bgee" id="ENSRNOG00000015660">
    <property type="expression patterns" value="Expressed in testis and 20 other cell types or tissues"/>
</dbReference>
<dbReference type="GO" id="GO:0005829">
    <property type="term" value="C:cytosol"/>
    <property type="evidence" value="ECO:0000314"/>
    <property type="project" value="UniProtKB"/>
</dbReference>
<dbReference type="GO" id="GO:0005783">
    <property type="term" value="C:endoplasmic reticulum"/>
    <property type="evidence" value="ECO:0000266"/>
    <property type="project" value="RGD"/>
</dbReference>
<dbReference type="GO" id="GO:0005778">
    <property type="term" value="C:peroxisomal membrane"/>
    <property type="evidence" value="ECO:0000314"/>
    <property type="project" value="UniProtKB"/>
</dbReference>
<dbReference type="GO" id="GO:0005777">
    <property type="term" value="C:peroxisome"/>
    <property type="evidence" value="ECO:0000314"/>
    <property type="project" value="HGNC-UCL"/>
</dbReference>
<dbReference type="GO" id="GO:0032991">
    <property type="term" value="C:protein-containing complex"/>
    <property type="evidence" value="ECO:0000266"/>
    <property type="project" value="RGD"/>
</dbReference>
<dbReference type="GO" id="GO:0032994">
    <property type="term" value="C:protein-lipid complex"/>
    <property type="evidence" value="ECO:0000266"/>
    <property type="project" value="RGD"/>
</dbReference>
<dbReference type="GO" id="GO:0008289">
    <property type="term" value="F:lipid binding"/>
    <property type="evidence" value="ECO:0000266"/>
    <property type="project" value="RGD"/>
</dbReference>
<dbReference type="GO" id="GO:0030674">
    <property type="term" value="F:protein-macromolecule adaptor activity"/>
    <property type="evidence" value="ECO:0000318"/>
    <property type="project" value="GO_Central"/>
</dbReference>
<dbReference type="GO" id="GO:0016557">
    <property type="term" value="P:peroxisome membrane biogenesis"/>
    <property type="evidence" value="ECO:0000314"/>
    <property type="project" value="RGD"/>
</dbReference>
<dbReference type="GO" id="GO:0007031">
    <property type="term" value="P:peroxisome organization"/>
    <property type="evidence" value="ECO:0000315"/>
    <property type="project" value="RGD"/>
</dbReference>
<dbReference type="GO" id="GO:0045046">
    <property type="term" value="P:protein import into peroxisome membrane"/>
    <property type="evidence" value="ECO:0000266"/>
    <property type="project" value="RGD"/>
</dbReference>
<dbReference type="InterPro" id="IPR006966">
    <property type="entry name" value="Peroxin-3"/>
</dbReference>
<dbReference type="PANTHER" id="PTHR28080">
    <property type="entry name" value="PEROXISOMAL BIOGENESIS FACTOR 3"/>
    <property type="match status" value="1"/>
</dbReference>
<dbReference type="PANTHER" id="PTHR28080:SF1">
    <property type="entry name" value="PEROXISOMAL BIOGENESIS FACTOR 3"/>
    <property type="match status" value="1"/>
</dbReference>
<dbReference type="Pfam" id="PF04882">
    <property type="entry name" value="Peroxin-3"/>
    <property type="match status" value="2"/>
</dbReference>
<sequence length="372" mass="42210">MLRSMWNFLKRHKKKCIFLGTVLGGVYILGKYGQKKLREIQEREAAEYIAQARRQYHFESNQRTCNMTVLSMLPTLREALMQQLNSESLTALLKNRPSNKLEIWEDLKIISFTRSIVAVYSTCMLVVLLRVQLNIIGGYIYLDNATVGKNGTSILAPPDVQQQYLSSIQHLLGDGLTELVTVIKQAVQRILGSISLKHSLSLLDLEQKLKEIRTLVEQHRSCWNDKDASKSSLCHYMMPDEETPLAAQAYGLSPRDITTIKLLNETRDMLESPDFSTVLNTCLNRGFSRLLDNMAEFFRPTEQDLQHGNSINSLSSVSLPLAKIIPIVNGQIHSVCSETPSHFVQDLLMMEQVKDFAANVYEAFSTPQQLEK</sequence>